<protein>
    <recommendedName>
        <fullName evidence="1">Integration host factor subunit beta</fullName>
        <shortName evidence="1">IHF-beta</shortName>
    </recommendedName>
</protein>
<name>IHFB_ECO27</name>
<reference key="1">
    <citation type="journal article" date="2009" name="J. Bacteriol.">
        <title>Complete genome sequence and comparative genome analysis of enteropathogenic Escherichia coli O127:H6 strain E2348/69.</title>
        <authorList>
            <person name="Iguchi A."/>
            <person name="Thomson N.R."/>
            <person name="Ogura Y."/>
            <person name="Saunders D."/>
            <person name="Ooka T."/>
            <person name="Henderson I.R."/>
            <person name="Harris D."/>
            <person name="Asadulghani M."/>
            <person name="Kurokawa K."/>
            <person name="Dean P."/>
            <person name="Kenny B."/>
            <person name="Quail M.A."/>
            <person name="Thurston S."/>
            <person name="Dougan G."/>
            <person name="Hayashi T."/>
            <person name="Parkhill J."/>
            <person name="Frankel G."/>
        </authorList>
    </citation>
    <scope>NUCLEOTIDE SEQUENCE [LARGE SCALE GENOMIC DNA]</scope>
    <source>
        <strain>E2348/69 / EPEC</strain>
    </source>
</reference>
<gene>
    <name evidence="1" type="primary">ihfB</name>
    <name evidence="1" type="synonym">himD</name>
    <name type="ordered locus">E2348C_0905</name>
</gene>
<feature type="chain" id="PRO_1000190441" description="Integration host factor subunit beta">
    <location>
        <begin position="1"/>
        <end position="94"/>
    </location>
</feature>
<keyword id="KW-0233">DNA recombination</keyword>
<keyword id="KW-0238">DNA-binding</keyword>
<keyword id="KW-1185">Reference proteome</keyword>
<keyword id="KW-0804">Transcription</keyword>
<keyword id="KW-0805">Transcription regulation</keyword>
<keyword id="KW-0810">Translation regulation</keyword>
<sequence length="94" mass="10637">MTKSELIERLATQQSHIPAKTVEDAVKDMLEHMASTLAQGERIEIRGFGSFSLHYRAPRTGRNPKTGDKVELEGKYVPHFKPGKELRDRANIYG</sequence>
<proteinExistence type="inferred from homology"/>
<organism>
    <name type="scientific">Escherichia coli O127:H6 (strain E2348/69 / EPEC)</name>
    <dbReference type="NCBI Taxonomy" id="574521"/>
    <lineage>
        <taxon>Bacteria</taxon>
        <taxon>Pseudomonadati</taxon>
        <taxon>Pseudomonadota</taxon>
        <taxon>Gammaproteobacteria</taxon>
        <taxon>Enterobacterales</taxon>
        <taxon>Enterobacteriaceae</taxon>
        <taxon>Escherichia</taxon>
    </lineage>
</organism>
<comment type="function">
    <text evidence="1">This protein is one of the two subunits of integration host factor, a specific DNA-binding protein that functions in genetic recombination as well as in transcriptional and translational control.</text>
</comment>
<comment type="subunit">
    <text evidence="1">Heterodimer of an alpha and a beta chain.</text>
</comment>
<comment type="similarity">
    <text evidence="1">Belongs to the bacterial histone-like protein family.</text>
</comment>
<dbReference type="EMBL" id="FM180568">
    <property type="protein sequence ID" value="CAS08453.1"/>
    <property type="molecule type" value="Genomic_DNA"/>
</dbReference>
<dbReference type="RefSeq" id="WP_000167334.1">
    <property type="nucleotide sequence ID" value="NC_011601.1"/>
</dbReference>
<dbReference type="SMR" id="B7UMZ8"/>
<dbReference type="KEGG" id="ecg:E2348C_0905"/>
<dbReference type="HOGENOM" id="CLU_105066_2_0_6"/>
<dbReference type="Proteomes" id="UP000008205">
    <property type="component" value="Chromosome"/>
</dbReference>
<dbReference type="GO" id="GO:0005694">
    <property type="term" value="C:chromosome"/>
    <property type="evidence" value="ECO:0007669"/>
    <property type="project" value="InterPro"/>
</dbReference>
<dbReference type="GO" id="GO:0005829">
    <property type="term" value="C:cytosol"/>
    <property type="evidence" value="ECO:0007669"/>
    <property type="project" value="TreeGrafter"/>
</dbReference>
<dbReference type="GO" id="GO:0003677">
    <property type="term" value="F:DNA binding"/>
    <property type="evidence" value="ECO:0007669"/>
    <property type="project" value="UniProtKB-UniRule"/>
</dbReference>
<dbReference type="GO" id="GO:0030527">
    <property type="term" value="F:structural constituent of chromatin"/>
    <property type="evidence" value="ECO:0007669"/>
    <property type="project" value="InterPro"/>
</dbReference>
<dbReference type="GO" id="GO:0006310">
    <property type="term" value="P:DNA recombination"/>
    <property type="evidence" value="ECO:0007669"/>
    <property type="project" value="UniProtKB-UniRule"/>
</dbReference>
<dbReference type="GO" id="GO:0006355">
    <property type="term" value="P:regulation of DNA-templated transcription"/>
    <property type="evidence" value="ECO:0007669"/>
    <property type="project" value="UniProtKB-UniRule"/>
</dbReference>
<dbReference type="GO" id="GO:0006417">
    <property type="term" value="P:regulation of translation"/>
    <property type="evidence" value="ECO:0007669"/>
    <property type="project" value="UniProtKB-UniRule"/>
</dbReference>
<dbReference type="CDD" id="cd13836">
    <property type="entry name" value="IHF_B"/>
    <property type="match status" value="1"/>
</dbReference>
<dbReference type="FunFam" id="4.10.520.10:FF:000003">
    <property type="entry name" value="Integration host factor subunit beta"/>
    <property type="match status" value="1"/>
</dbReference>
<dbReference type="Gene3D" id="4.10.520.10">
    <property type="entry name" value="IHF-like DNA-binding proteins"/>
    <property type="match status" value="1"/>
</dbReference>
<dbReference type="HAMAP" id="MF_00381">
    <property type="entry name" value="IHF_beta"/>
    <property type="match status" value="1"/>
</dbReference>
<dbReference type="InterPro" id="IPR000119">
    <property type="entry name" value="Hist_DNA-bd"/>
</dbReference>
<dbReference type="InterPro" id="IPR020816">
    <property type="entry name" value="Histone-like_DNA-bd_CS"/>
</dbReference>
<dbReference type="InterPro" id="IPR010992">
    <property type="entry name" value="IHF-like_DNA-bd_dom_sf"/>
</dbReference>
<dbReference type="InterPro" id="IPR005685">
    <property type="entry name" value="IHF_beta"/>
</dbReference>
<dbReference type="NCBIfam" id="TIGR00988">
    <property type="entry name" value="hip"/>
    <property type="match status" value="1"/>
</dbReference>
<dbReference type="NCBIfam" id="NF001222">
    <property type="entry name" value="PRK00199.1"/>
    <property type="match status" value="1"/>
</dbReference>
<dbReference type="PANTHER" id="PTHR33175">
    <property type="entry name" value="DNA-BINDING PROTEIN HU"/>
    <property type="match status" value="1"/>
</dbReference>
<dbReference type="PANTHER" id="PTHR33175:SF5">
    <property type="entry name" value="INTEGRATION HOST FACTOR SUBUNIT BETA"/>
    <property type="match status" value="1"/>
</dbReference>
<dbReference type="Pfam" id="PF00216">
    <property type="entry name" value="Bac_DNA_binding"/>
    <property type="match status" value="1"/>
</dbReference>
<dbReference type="PRINTS" id="PR01727">
    <property type="entry name" value="DNABINDINGHU"/>
</dbReference>
<dbReference type="SMART" id="SM00411">
    <property type="entry name" value="BHL"/>
    <property type="match status" value="1"/>
</dbReference>
<dbReference type="SUPFAM" id="SSF47729">
    <property type="entry name" value="IHF-like DNA-binding proteins"/>
    <property type="match status" value="1"/>
</dbReference>
<dbReference type="PROSITE" id="PS00045">
    <property type="entry name" value="HISTONE_LIKE"/>
    <property type="match status" value="1"/>
</dbReference>
<evidence type="ECO:0000255" key="1">
    <source>
        <dbReference type="HAMAP-Rule" id="MF_00381"/>
    </source>
</evidence>
<accession>B7UMZ8</accession>